<proteinExistence type="inferred from homology"/>
<feature type="chain" id="PRO_1000078669" description="Protein RecA">
    <location>
        <begin position="1"/>
        <end position="348"/>
    </location>
</feature>
<feature type="binding site" evidence="1">
    <location>
        <begin position="67"/>
        <end position="74"/>
    </location>
    <ligand>
        <name>ATP</name>
        <dbReference type="ChEBI" id="CHEBI:30616"/>
    </ligand>
</feature>
<keyword id="KW-0067">ATP-binding</keyword>
<keyword id="KW-0963">Cytoplasm</keyword>
<keyword id="KW-0227">DNA damage</keyword>
<keyword id="KW-0233">DNA recombination</keyword>
<keyword id="KW-0234">DNA repair</keyword>
<keyword id="KW-0238">DNA-binding</keyword>
<keyword id="KW-0547">Nucleotide-binding</keyword>
<keyword id="KW-1185">Reference proteome</keyword>
<keyword id="KW-0742">SOS response</keyword>
<name>RECA_KINRD</name>
<protein>
    <recommendedName>
        <fullName evidence="1">Protein RecA</fullName>
    </recommendedName>
    <alternativeName>
        <fullName evidence="1">Recombinase A</fullName>
    </alternativeName>
</protein>
<comment type="function">
    <text evidence="1">Can catalyze the hydrolysis of ATP in the presence of single-stranded DNA, the ATP-dependent uptake of single-stranded DNA by duplex DNA, and the ATP-dependent hybridization of homologous single-stranded DNAs. It interacts with LexA causing its activation and leading to its autocatalytic cleavage.</text>
</comment>
<comment type="subcellular location">
    <subcellularLocation>
        <location evidence="1">Cytoplasm</location>
    </subcellularLocation>
</comment>
<comment type="similarity">
    <text evidence="1">Belongs to the RecA family.</text>
</comment>
<organism>
    <name type="scientific">Kineococcus radiotolerans (strain ATCC BAA-149 / DSM 14245 / SRS30216)</name>
    <dbReference type="NCBI Taxonomy" id="266940"/>
    <lineage>
        <taxon>Bacteria</taxon>
        <taxon>Bacillati</taxon>
        <taxon>Actinomycetota</taxon>
        <taxon>Actinomycetes</taxon>
        <taxon>Kineosporiales</taxon>
        <taxon>Kineosporiaceae</taxon>
        <taxon>Kineococcus</taxon>
    </lineage>
</organism>
<accession>A6W841</accession>
<evidence type="ECO:0000255" key="1">
    <source>
        <dbReference type="HAMAP-Rule" id="MF_00268"/>
    </source>
</evidence>
<sequence>MPAPADREKALDAALAAIDKNFGKGSVMRLGDEVRPPIEVIPTGSISLDVALGIGGLPRGRVVEIYGPESSGKTTVALHAVASAQKAGGIAAFIDAEHALDPDYAAKLGVDTDALLVSQPDTGEQALEIADMLIRSGALDIIVIDSVAALVPKAEIEGEMGDSHVGLQARLMSQALRKITGALNHSGTTAIFINQLREKIGVMFGSPETTTGGKALKFYASVRLDVRRIETLKDGTNPVGNRTRVKVVKNKVSPPFKQAEFDIIYGQGISREGGLIDLGVEHGFVRKSGAWYTYEGDQLGQGKENARAFLRDNPDLGDEIEKRIKEKLGIGARLDAPAEVDVEEKVDF</sequence>
<dbReference type="EMBL" id="CP000750">
    <property type="protein sequence ID" value="ABS02980.1"/>
    <property type="molecule type" value="Genomic_DNA"/>
</dbReference>
<dbReference type="RefSeq" id="WP_011981881.1">
    <property type="nucleotide sequence ID" value="NC_009664.2"/>
</dbReference>
<dbReference type="SMR" id="A6W841"/>
<dbReference type="STRING" id="266940.Krad_1492"/>
<dbReference type="KEGG" id="kra:Krad_1492"/>
<dbReference type="eggNOG" id="COG0468">
    <property type="taxonomic scope" value="Bacteria"/>
</dbReference>
<dbReference type="HOGENOM" id="CLU_040469_3_2_11"/>
<dbReference type="OrthoDB" id="9776733at2"/>
<dbReference type="Proteomes" id="UP000001116">
    <property type="component" value="Chromosome"/>
</dbReference>
<dbReference type="GO" id="GO:0005829">
    <property type="term" value="C:cytosol"/>
    <property type="evidence" value="ECO:0007669"/>
    <property type="project" value="TreeGrafter"/>
</dbReference>
<dbReference type="GO" id="GO:0005524">
    <property type="term" value="F:ATP binding"/>
    <property type="evidence" value="ECO:0007669"/>
    <property type="project" value="UniProtKB-UniRule"/>
</dbReference>
<dbReference type="GO" id="GO:0016887">
    <property type="term" value="F:ATP hydrolysis activity"/>
    <property type="evidence" value="ECO:0007669"/>
    <property type="project" value="InterPro"/>
</dbReference>
<dbReference type="GO" id="GO:0140664">
    <property type="term" value="F:ATP-dependent DNA damage sensor activity"/>
    <property type="evidence" value="ECO:0007669"/>
    <property type="project" value="InterPro"/>
</dbReference>
<dbReference type="GO" id="GO:0003684">
    <property type="term" value="F:damaged DNA binding"/>
    <property type="evidence" value="ECO:0007669"/>
    <property type="project" value="UniProtKB-UniRule"/>
</dbReference>
<dbReference type="GO" id="GO:0003697">
    <property type="term" value="F:single-stranded DNA binding"/>
    <property type="evidence" value="ECO:0007669"/>
    <property type="project" value="UniProtKB-UniRule"/>
</dbReference>
<dbReference type="GO" id="GO:0006310">
    <property type="term" value="P:DNA recombination"/>
    <property type="evidence" value="ECO:0007669"/>
    <property type="project" value="UniProtKB-UniRule"/>
</dbReference>
<dbReference type="GO" id="GO:0006281">
    <property type="term" value="P:DNA repair"/>
    <property type="evidence" value="ECO:0007669"/>
    <property type="project" value="UniProtKB-UniRule"/>
</dbReference>
<dbReference type="GO" id="GO:0009432">
    <property type="term" value="P:SOS response"/>
    <property type="evidence" value="ECO:0007669"/>
    <property type="project" value="UniProtKB-UniRule"/>
</dbReference>
<dbReference type="CDD" id="cd00983">
    <property type="entry name" value="RecA"/>
    <property type="match status" value="1"/>
</dbReference>
<dbReference type="FunFam" id="3.40.50.300:FF:000087">
    <property type="entry name" value="Recombinase RecA"/>
    <property type="match status" value="1"/>
</dbReference>
<dbReference type="Gene3D" id="3.40.50.300">
    <property type="entry name" value="P-loop containing nucleotide triphosphate hydrolases"/>
    <property type="match status" value="1"/>
</dbReference>
<dbReference type="HAMAP" id="MF_00268">
    <property type="entry name" value="RecA"/>
    <property type="match status" value="1"/>
</dbReference>
<dbReference type="InterPro" id="IPR003593">
    <property type="entry name" value="AAA+_ATPase"/>
</dbReference>
<dbReference type="InterPro" id="IPR013765">
    <property type="entry name" value="DNA_recomb/repair_RecA"/>
</dbReference>
<dbReference type="InterPro" id="IPR020584">
    <property type="entry name" value="DNA_recomb/repair_RecA_CS"/>
</dbReference>
<dbReference type="InterPro" id="IPR027417">
    <property type="entry name" value="P-loop_NTPase"/>
</dbReference>
<dbReference type="InterPro" id="IPR049261">
    <property type="entry name" value="RecA-like_C"/>
</dbReference>
<dbReference type="InterPro" id="IPR049428">
    <property type="entry name" value="RecA-like_N"/>
</dbReference>
<dbReference type="InterPro" id="IPR020588">
    <property type="entry name" value="RecA_ATP-bd"/>
</dbReference>
<dbReference type="InterPro" id="IPR023400">
    <property type="entry name" value="RecA_C_sf"/>
</dbReference>
<dbReference type="InterPro" id="IPR020587">
    <property type="entry name" value="RecA_monomer-monomer_interface"/>
</dbReference>
<dbReference type="NCBIfam" id="TIGR02012">
    <property type="entry name" value="tigrfam_recA"/>
    <property type="match status" value="1"/>
</dbReference>
<dbReference type="PANTHER" id="PTHR45900:SF1">
    <property type="entry name" value="MITOCHONDRIAL DNA REPAIR PROTEIN RECA HOMOLOG-RELATED"/>
    <property type="match status" value="1"/>
</dbReference>
<dbReference type="PANTHER" id="PTHR45900">
    <property type="entry name" value="RECA"/>
    <property type="match status" value="1"/>
</dbReference>
<dbReference type="Pfam" id="PF00154">
    <property type="entry name" value="RecA"/>
    <property type="match status" value="1"/>
</dbReference>
<dbReference type="Pfam" id="PF21096">
    <property type="entry name" value="RecA_C"/>
    <property type="match status" value="1"/>
</dbReference>
<dbReference type="PRINTS" id="PR00142">
    <property type="entry name" value="RECA"/>
</dbReference>
<dbReference type="SMART" id="SM00382">
    <property type="entry name" value="AAA"/>
    <property type="match status" value="1"/>
</dbReference>
<dbReference type="SUPFAM" id="SSF52540">
    <property type="entry name" value="P-loop containing nucleoside triphosphate hydrolases"/>
    <property type="match status" value="1"/>
</dbReference>
<dbReference type="SUPFAM" id="SSF54752">
    <property type="entry name" value="RecA protein, C-terminal domain"/>
    <property type="match status" value="1"/>
</dbReference>
<dbReference type="PROSITE" id="PS00321">
    <property type="entry name" value="RECA_1"/>
    <property type="match status" value="1"/>
</dbReference>
<dbReference type="PROSITE" id="PS50162">
    <property type="entry name" value="RECA_2"/>
    <property type="match status" value="1"/>
</dbReference>
<dbReference type="PROSITE" id="PS50163">
    <property type="entry name" value="RECA_3"/>
    <property type="match status" value="1"/>
</dbReference>
<gene>
    <name evidence="1" type="primary">recA</name>
    <name type="ordered locus">Krad_1492</name>
</gene>
<reference key="1">
    <citation type="journal article" date="2008" name="PLoS ONE">
        <title>Survival in nuclear waste, extreme resistance, and potential applications gleaned from the genome sequence of Kineococcus radiotolerans SRS30216.</title>
        <authorList>
            <person name="Bagwell C.E."/>
            <person name="Bhat S."/>
            <person name="Hawkins G.M."/>
            <person name="Smith B.W."/>
            <person name="Biswas T."/>
            <person name="Hoover T.R."/>
            <person name="Saunders E."/>
            <person name="Han C.S."/>
            <person name="Tsodikov O.V."/>
            <person name="Shimkets L.J."/>
        </authorList>
    </citation>
    <scope>NUCLEOTIDE SEQUENCE [LARGE SCALE GENOMIC DNA]</scope>
    <source>
        <strain>ATCC BAA-149 / DSM 14245 / SRS30216</strain>
    </source>
</reference>